<dbReference type="EC" id="2.4.2.29" evidence="1"/>
<dbReference type="EMBL" id="AE015451">
    <property type="protein sequence ID" value="AAN66458.1"/>
    <property type="molecule type" value="Genomic_DNA"/>
</dbReference>
<dbReference type="RefSeq" id="NP_742994.1">
    <property type="nucleotide sequence ID" value="NC_002947.4"/>
</dbReference>
<dbReference type="RefSeq" id="WP_003248558.1">
    <property type="nucleotide sequence ID" value="NZ_CP169744.1"/>
</dbReference>
<dbReference type="SMR" id="Q88PL7"/>
<dbReference type="STRING" id="160488.PP_0833"/>
<dbReference type="PaxDb" id="160488-PP_0833"/>
<dbReference type="GeneID" id="83678186"/>
<dbReference type="KEGG" id="ppu:PP_0833"/>
<dbReference type="PATRIC" id="fig|160488.4.peg.892"/>
<dbReference type="eggNOG" id="COG0343">
    <property type="taxonomic scope" value="Bacteria"/>
</dbReference>
<dbReference type="HOGENOM" id="CLU_022060_0_1_6"/>
<dbReference type="OrthoDB" id="9805417at2"/>
<dbReference type="PhylomeDB" id="Q88PL7"/>
<dbReference type="BioCyc" id="PPUT160488:G1G01-908-MONOMER"/>
<dbReference type="UniPathway" id="UPA00392"/>
<dbReference type="Proteomes" id="UP000000556">
    <property type="component" value="Chromosome"/>
</dbReference>
<dbReference type="GO" id="GO:0005829">
    <property type="term" value="C:cytosol"/>
    <property type="evidence" value="ECO:0007669"/>
    <property type="project" value="TreeGrafter"/>
</dbReference>
<dbReference type="GO" id="GO:0046872">
    <property type="term" value="F:metal ion binding"/>
    <property type="evidence" value="ECO:0007669"/>
    <property type="project" value="UniProtKB-KW"/>
</dbReference>
<dbReference type="GO" id="GO:0008479">
    <property type="term" value="F:tRNA-guanosine(34) queuine transglycosylase activity"/>
    <property type="evidence" value="ECO:0007669"/>
    <property type="project" value="UniProtKB-UniRule"/>
</dbReference>
<dbReference type="GO" id="GO:0008616">
    <property type="term" value="P:queuosine biosynthetic process"/>
    <property type="evidence" value="ECO:0007669"/>
    <property type="project" value="UniProtKB-UniRule"/>
</dbReference>
<dbReference type="GO" id="GO:0002099">
    <property type="term" value="P:tRNA wobble guanine modification"/>
    <property type="evidence" value="ECO:0007669"/>
    <property type="project" value="TreeGrafter"/>
</dbReference>
<dbReference type="GO" id="GO:0101030">
    <property type="term" value="P:tRNA-guanine transglycosylation"/>
    <property type="evidence" value="ECO:0007669"/>
    <property type="project" value="InterPro"/>
</dbReference>
<dbReference type="FunFam" id="3.20.20.105:FF:000001">
    <property type="entry name" value="Queuine tRNA-ribosyltransferase"/>
    <property type="match status" value="1"/>
</dbReference>
<dbReference type="Gene3D" id="3.20.20.105">
    <property type="entry name" value="Queuine tRNA-ribosyltransferase-like"/>
    <property type="match status" value="1"/>
</dbReference>
<dbReference type="HAMAP" id="MF_00168">
    <property type="entry name" value="Q_tRNA_Tgt"/>
    <property type="match status" value="1"/>
</dbReference>
<dbReference type="InterPro" id="IPR050076">
    <property type="entry name" value="ArchSynthase1/Queuine_TRR"/>
</dbReference>
<dbReference type="InterPro" id="IPR004803">
    <property type="entry name" value="TGT"/>
</dbReference>
<dbReference type="InterPro" id="IPR036511">
    <property type="entry name" value="TGT-like_sf"/>
</dbReference>
<dbReference type="InterPro" id="IPR002616">
    <property type="entry name" value="tRNA_ribo_trans-like"/>
</dbReference>
<dbReference type="NCBIfam" id="TIGR00430">
    <property type="entry name" value="Q_tRNA_tgt"/>
    <property type="match status" value="1"/>
</dbReference>
<dbReference type="NCBIfam" id="TIGR00449">
    <property type="entry name" value="tgt_general"/>
    <property type="match status" value="1"/>
</dbReference>
<dbReference type="PANTHER" id="PTHR46499">
    <property type="entry name" value="QUEUINE TRNA-RIBOSYLTRANSFERASE"/>
    <property type="match status" value="1"/>
</dbReference>
<dbReference type="PANTHER" id="PTHR46499:SF1">
    <property type="entry name" value="QUEUINE TRNA-RIBOSYLTRANSFERASE"/>
    <property type="match status" value="1"/>
</dbReference>
<dbReference type="Pfam" id="PF01702">
    <property type="entry name" value="TGT"/>
    <property type="match status" value="1"/>
</dbReference>
<dbReference type="SUPFAM" id="SSF51713">
    <property type="entry name" value="tRNA-guanine transglycosylase"/>
    <property type="match status" value="1"/>
</dbReference>
<feature type="chain" id="PRO_0000135507" description="Queuine tRNA-ribosyltransferase">
    <location>
        <begin position="1"/>
        <end position="371"/>
    </location>
</feature>
<feature type="region of interest" description="RNA binding" evidence="1">
    <location>
        <begin position="243"/>
        <end position="249"/>
    </location>
</feature>
<feature type="region of interest" description="RNA binding; important for wobble base 34 recognition" evidence="1">
    <location>
        <begin position="267"/>
        <end position="271"/>
    </location>
</feature>
<feature type="active site" description="Proton acceptor" evidence="1">
    <location>
        <position position="89"/>
    </location>
</feature>
<feature type="active site" description="Nucleophile" evidence="1">
    <location>
        <position position="262"/>
    </location>
</feature>
<feature type="binding site" evidence="1">
    <location>
        <begin position="89"/>
        <end position="93"/>
    </location>
    <ligand>
        <name>substrate</name>
    </ligand>
</feature>
<feature type="binding site" evidence="1">
    <location>
        <position position="143"/>
    </location>
    <ligand>
        <name>substrate</name>
    </ligand>
</feature>
<feature type="binding site" evidence="1">
    <location>
        <position position="185"/>
    </location>
    <ligand>
        <name>substrate</name>
    </ligand>
</feature>
<feature type="binding site" evidence="1">
    <location>
        <position position="212"/>
    </location>
    <ligand>
        <name>substrate</name>
    </ligand>
</feature>
<feature type="binding site" evidence="1">
    <location>
        <position position="300"/>
    </location>
    <ligand>
        <name>Zn(2+)</name>
        <dbReference type="ChEBI" id="CHEBI:29105"/>
    </ligand>
</feature>
<feature type="binding site" evidence="1">
    <location>
        <position position="302"/>
    </location>
    <ligand>
        <name>Zn(2+)</name>
        <dbReference type="ChEBI" id="CHEBI:29105"/>
    </ligand>
</feature>
<feature type="binding site" evidence="1">
    <location>
        <position position="305"/>
    </location>
    <ligand>
        <name>Zn(2+)</name>
        <dbReference type="ChEBI" id="CHEBI:29105"/>
    </ligand>
</feature>
<feature type="binding site" evidence="1">
    <location>
        <position position="331"/>
    </location>
    <ligand>
        <name>Zn(2+)</name>
        <dbReference type="ChEBI" id="CHEBI:29105"/>
    </ligand>
</feature>
<organism>
    <name type="scientific">Pseudomonas putida (strain ATCC 47054 / DSM 6125 / CFBP 8728 / NCIMB 11950 / KT2440)</name>
    <dbReference type="NCBI Taxonomy" id="160488"/>
    <lineage>
        <taxon>Bacteria</taxon>
        <taxon>Pseudomonadati</taxon>
        <taxon>Pseudomonadota</taxon>
        <taxon>Gammaproteobacteria</taxon>
        <taxon>Pseudomonadales</taxon>
        <taxon>Pseudomonadaceae</taxon>
        <taxon>Pseudomonas</taxon>
    </lineage>
</organism>
<reference key="1">
    <citation type="journal article" date="2002" name="Environ. Microbiol.">
        <title>Complete genome sequence and comparative analysis of the metabolically versatile Pseudomonas putida KT2440.</title>
        <authorList>
            <person name="Nelson K.E."/>
            <person name="Weinel C."/>
            <person name="Paulsen I.T."/>
            <person name="Dodson R.J."/>
            <person name="Hilbert H."/>
            <person name="Martins dos Santos V.A.P."/>
            <person name="Fouts D.E."/>
            <person name="Gill S.R."/>
            <person name="Pop M."/>
            <person name="Holmes M."/>
            <person name="Brinkac L.M."/>
            <person name="Beanan M.J."/>
            <person name="DeBoy R.T."/>
            <person name="Daugherty S.C."/>
            <person name="Kolonay J.F."/>
            <person name="Madupu R."/>
            <person name="Nelson W.C."/>
            <person name="White O."/>
            <person name="Peterson J.D."/>
            <person name="Khouri H.M."/>
            <person name="Hance I."/>
            <person name="Chris Lee P."/>
            <person name="Holtzapple E.K."/>
            <person name="Scanlan D."/>
            <person name="Tran K."/>
            <person name="Moazzez A."/>
            <person name="Utterback T.R."/>
            <person name="Rizzo M."/>
            <person name="Lee K."/>
            <person name="Kosack D."/>
            <person name="Moestl D."/>
            <person name="Wedler H."/>
            <person name="Lauber J."/>
            <person name="Stjepandic D."/>
            <person name="Hoheisel J."/>
            <person name="Straetz M."/>
            <person name="Heim S."/>
            <person name="Kiewitz C."/>
            <person name="Eisen J.A."/>
            <person name="Timmis K.N."/>
            <person name="Duesterhoeft A."/>
            <person name="Tuemmler B."/>
            <person name="Fraser C.M."/>
        </authorList>
    </citation>
    <scope>NUCLEOTIDE SEQUENCE [LARGE SCALE GENOMIC DNA]</scope>
    <source>
        <strain>ATCC 47054 / DSM 6125 / CFBP 8728 / NCIMB 11950 / KT2440</strain>
    </source>
</reference>
<gene>
    <name evidence="1" type="primary">tgt</name>
    <name type="ordered locus">PP_0833</name>
</gene>
<protein>
    <recommendedName>
        <fullName evidence="1">Queuine tRNA-ribosyltransferase</fullName>
        <ecNumber evidence="1">2.4.2.29</ecNumber>
    </recommendedName>
    <alternativeName>
        <fullName evidence="1">Guanine insertion enzyme</fullName>
    </alternativeName>
    <alternativeName>
        <fullName evidence="1">tRNA-guanine transglycosylase</fullName>
    </alternativeName>
</protein>
<name>TGT_PSEPK</name>
<keyword id="KW-0328">Glycosyltransferase</keyword>
<keyword id="KW-0479">Metal-binding</keyword>
<keyword id="KW-0671">Queuosine biosynthesis</keyword>
<keyword id="KW-1185">Reference proteome</keyword>
<keyword id="KW-0808">Transferase</keyword>
<keyword id="KW-0819">tRNA processing</keyword>
<keyword id="KW-0862">Zinc</keyword>
<proteinExistence type="inferred from homology"/>
<sequence>MSFELLATDGKARRGRITFPRGTVETPAFMPVGTYGTVKGMLPRDIEAIGAEMILGNTFHLWLRPGTEVIKKHNGLHDFMQWKGPILTDSGGFQVFSLGAMRKIKEEGVTFASPVDGSKVFMGPEESMQVQRDLGSDVVMIFDECTPYPAEHDVARTSMELSLRWAQRSKNAHADNTAALFGIVQGGMYQDLRMRSLEGLENIGFDGLAIGGLSVGEPKHEMIKVLDYLPDQMPADKPRYLMGVGKPEDLVEGVRRGVDMFDCVMPTRNARNGHLFVDTGVIKIRNAFHRHDESPLDPTCDCYTCTNFSRAYLHHLDKCGEMLSSMLNTIHNLRHYQRLMAGLREAIQQGKLAAFVDAFYAKRGLPVPPLD</sequence>
<comment type="function">
    <text evidence="1">Catalyzes the base-exchange of a guanine (G) residue with the queuine precursor 7-aminomethyl-7-deazaguanine (PreQ1) at position 34 (anticodon wobble position) in tRNAs with GU(N) anticodons (tRNA-Asp, -Asn, -His and -Tyr). Catalysis occurs through a double-displacement mechanism. The nucleophile active site attacks the C1' of nucleotide 34 to detach the guanine base from the RNA, forming a covalent enzyme-RNA intermediate. The proton acceptor active site deprotonates the incoming PreQ1, allowing a nucleophilic attack on the C1' of the ribose to form the product. After dissociation, two additional enzymatic reactions on the tRNA convert PreQ1 to queuine (Q), resulting in the hypermodified nucleoside queuosine (7-(((4,5-cis-dihydroxy-2-cyclopenten-1-yl)amino)methyl)-7-deazaguanosine).</text>
</comment>
<comment type="catalytic activity">
    <reaction evidence="1">
        <text>7-aminomethyl-7-carbaguanine + guanosine(34) in tRNA = 7-aminomethyl-7-carbaguanosine(34) in tRNA + guanine</text>
        <dbReference type="Rhea" id="RHEA:24104"/>
        <dbReference type="Rhea" id="RHEA-COMP:10341"/>
        <dbReference type="Rhea" id="RHEA-COMP:10342"/>
        <dbReference type="ChEBI" id="CHEBI:16235"/>
        <dbReference type="ChEBI" id="CHEBI:58703"/>
        <dbReference type="ChEBI" id="CHEBI:74269"/>
        <dbReference type="ChEBI" id="CHEBI:82833"/>
        <dbReference type="EC" id="2.4.2.29"/>
    </reaction>
</comment>
<comment type="cofactor">
    <cofactor evidence="1">
        <name>Zn(2+)</name>
        <dbReference type="ChEBI" id="CHEBI:29105"/>
    </cofactor>
    <text evidence="1">Binds 1 zinc ion per subunit.</text>
</comment>
<comment type="pathway">
    <text evidence="1">tRNA modification; tRNA-queuosine biosynthesis.</text>
</comment>
<comment type="subunit">
    <text evidence="1">Homodimer. Within each dimer, one monomer is responsible for RNA recognition and catalysis, while the other monomer binds to the replacement base PreQ1.</text>
</comment>
<comment type="similarity">
    <text evidence="1">Belongs to the queuine tRNA-ribosyltransferase family.</text>
</comment>
<accession>Q88PL7</accession>
<evidence type="ECO:0000255" key="1">
    <source>
        <dbReference type="HAMAP-Rule" id="MF_00168"/>
    </source>
</evidence>